<name>RF1_STRT2</name>
<comment type="function">
    <text evidence="1">Peptide chain release factor 1 directs the termination of translation in response to the peptide chain termination codons UAG and UAA.</text>
</comment>
<comment type="subcellular location">
    <subcellularLocation>
        <location evidence="1">Cytoplasm</location>
    </subcellularLocation>
</comment>
<comment type="PTM">
    <text evidence="1">Methylated by PrmC. Methylation increases the termination efficiency of RF1.</text>
</comment>
<comment type="similarity">
    <text evidence="1">Belongs to the prokaryotic/mitochondrial release factor family.</text>
</comment>
<sequence>MNIYDQLQAVEDRYEELGELLSDPEVVSDTKRFMELSREEANTRETVIAYREYKQVIQNISDAEEMIKEASGDADLEEMAKEELKKSKAAKEEYEERLKILLLPKDPNDDKNIILEIRGAAGGDEAALFAGDLLAMYQKYAETQGWRFEVMEASYNGVGGIKEVVAMVSGESVYSKLKYESGAHRVQRVPVTESQGRVHTSTATVLVMPEVEEMEYEIDPKDLRVDIYHASGAGGQNVNKVATAVRMVHIPTGIKVEMQEERTQQKNRDKALKIIRARVADHFAQIAQDEQDAERKSTVGTGDRSERIRTYNFPQNRVTDHRIGLTLQKLDTILAGKMDEVIDALVLYDQTQKLEELNK</sequence>
<protein>
    <recommendedName>
        <fullName evidence="1">Peptide chain release factor 1</fullName>
        <shortName evidence="1">RF-1</shortName>
    </recommendedName>
</protein>
<dbReference type="EMBL" id="CP000023">
    <property type="protein sequence ID" value="AAV60443.1"/>
    <property type="molecule type" value="Genomic_DNA"/>
</dbReference>
<dbReference type="RefSeq" id="WP_002948472.1">
    <property type="nucleotide sequence ID" value="NC_006448.1"/>
</dbReference>
<dbReference type="SMR" id="Q5M4W4"/>
<dbReference type="STRING" id="264199.stu0752"/>
<dbReference type="GeneID" id="66898650"/>
<dbReference type="KEGG" id="stl:stu0752"/>
<dbReference type="eggNOG" id="COG0216">
    <property type="taxonomic scope" value="Bacteria"/>
</dbReference>
<dbReference type="HOGENOM" id="CLU_036856_0_1_9"/>
<dbReference type="Proteomes" id="UP000001170">
    <property type="component" value="Chromosome"/>
</dbReference>
<dbReference type="GO" id="GO:0005737">
    <property type="term" value="C:cytoplasm"/>
    <property type="evidence" value="ECO:0007669"/>
    <property type="project" value="UniProtKB-SubCell"/>
</dbReference>
<dbReference type="GO" id="GO:0016149">
    <property type="term" value="F:translation release factor activity, codon specific"/>
    <property type="evidence" value="ECO:0007669"/>
    <property type="project" value="UniProtKB-UniRule"/>
</dbReference>
<dbReference type="FunFam" id="3.30.160.20:FF:000027">
    <property type="entry name" value="Peptide chain release factor 1"/>
    <property type="match status" value="1"/>
</dbReference>
<dbReference type="FunFam" id="3.30.70.1660:FF:000002">
    <property type="entry name" value="Peptide chain release factor 1"/>
    <property type="match status" value="1"/>
</dbReference>
<dbReference type="FunFam" id="3.30.70.1660:FF:000004">
    <property type="entry name" value="Peptide chain release factor 1"/>
    <property type="match status" value="1"/>
</dbReference>
<dbReference type="Gene3D" id="3.30.160.20">
    <property type="match status" value="1"/>
</dbReference>
<dbReference type="Gene3D" id="3.30.70.1660">
    <property type="match status" value="2"/>
</dbReference>
<dbReference type="Gene3D" id="6.10.140.1950">
    <property type="match status" value="1"/>
</dbReference>
<dbReference type="HAMAP" id="MF_00093">
    <property type="entry name" value="Rel_fac_1"/>
    <property type="match status" value="1"/>
</dbReference>
<dbReference type="InterPro" id="IPR005139">
    <property type="entry name" value="PCRF"/>
</dbReference>
<dbReference type="InterPro" id="IPR000352">
    <property type="entry name" value="Pep_chain_release_fac_I"/>
</dbReference>
<dbReference type="InterPro" id="IPR045853">
    <property type="entry name" value="Pep_chain_release_fac_I_sf"/>
</dbReference>
<dbReference type="InterPro" id="IPR050057">
    <property type="entry name" value="Prokaryotic/Mito_RF"/>
</dbReference>
<dbReference type="InterPro" id="IPR004373">
    <property type="entry name" value="RF-1"/>
</dbReference>
<dbReference type="NCBIfam" id="TIGR00019">
    <property type="entry name" value="prfA"/>
    <property type="match status" value="1"/>
</dbReference>
<dbReference type="NCBIfam" id="NF001859">
    <property type="entry name" value="PRK00591.1"/>
    <property type="match status" value="1"/>
</dbReference>
<dbReference type="PANTHER" id="PTHR43804">
    <property type="entry name" value="LD18447P"/>
    <property type="match status" value="1"/>
</dbReference>
<dbReference type="PANTHER" id="PTHR43804:SF7">
    <property type="entry name" value="LD18447P"/>
    <property type="match status" value="1"/>
</dbReference>
<dbReference type="Pfam" id="PF03462">
    <property type="entry name" value="PCRF"/>
    <property type="match status" value="1"/>
</dbReference>
<dbReference type="Pfam" id="PF00472">
    <property type="entry name" value="RF-1"/>
    <property type="match status" value="1"/>
</dbReference>
<dbReference type="SMART" id="SM00937">
    <property type="entry name" value="PCRF"/>
    <property type="match status" value="1"/>
</dbReference>
<dbReference type="SUPFAM" id="SSF75620">
    <property type="entry name" value="Release factor"/>
    <property type="match status" value="1"/>
</dbReference>
<dbReference type="PROSITE" id="PS00745">
    <property type="entry name" value="RF_PROK_I"/>
    <property type="match status" value="1"/>
</dbReference>
<keyword id="KW-0963">Cytoplasm</keyword>
<keyword id="KW-0488">Methylation</keyword>
<keyword id="KW-0648">Protein biosynthesis</keyword>
<keyword id="KW-1185">Reference proteome</keyword>
<evidence type="ECO:0000255" key="1">
    <source>
        <dbReference type="HAMAP-Rule" id="MF_00093"/>
    </source>
</evidence>
<organism>
    <name type="scientific">Streptococcus thermophilus (strain ATCC BAA-250 / LMG 18311)</name>
    <dbReference type="NCBI Taxonomy" id="264199"/>
    <lineage>
        <taxon>Bacteria</taxon>
        <taxon>Bacillati</taxon>
        <taxon>Bacillota</taxon>
        <taxon>Bacilli</taxon>
        <taxon>Lactobacillales</taxon>
        <taxon>Streptococcaceae</taxon>
        <taxon>Streptococcus</taxon>
    </lineage>
</organism>
<feature type="chain" id="PRO_0000263369" description="Peptide chain release factor 1">
    <location>
        <begin position="1"/>
        <end position="359"/>
    </location>
</feature>
<feature type="modified residue" description="N5-methylglutamine" evidence="1">
    <location>
        <position position="236"/>
    </location>
</feature>
<reference key="1">
    <citation type="journal article" date="2004" name="Nat. Biotechnol.">
        <title>Complete sequence and comparative genome analysis of the dairy bacterium Streptococcus thermophilus.</title>
        <authorList>
            <person name="Bolotin A."/>
            <person name="Quinquis B."/>
            <person name="Renault P."/>
            <person name="Sorokin A."/>
            <person name="Ehrlich S.D."/>
            <person name="Kulakauskas S."/>
            <person name="Lapidus A."/>
            <person name="Goltsman E."/>
            <person name="Mazur M."/>
            <person name="Pusch G.D."/>
            <person name="Fonstein M."/>
            <person name="Overbeek R."/>
            <person name="Kyprides N."/>
            <person name="Purnelle B."/>
            <person name="Prozzi D."/>
            <person name="Ngui K."/>
            <person name="Masuy D."/>
            <person name="Hancy F."/>
            <person name="Burteau S."/>
            <person name="Boutry M."/>
            <person name="Delcour J."/>
            <person name="Goffeau A."/>
            <person name="Hols P."/>
        </authorList>
    </citation>
    <scope>NUCLEOTIDE SEQUENCE [LARGE SCALE GENOMIC DNA]</scope>
    <source>
        <strain>ATCC BAA-250 / LMG 18311</strain>
    </source>
</reference>
<proteinExistence type="inferred from homology"/>
<gene>
    <name evidence="1" type="primary">prfA</name>
    <name type="ordered locus">stu0752</name>
</gene>
<accession>Q5M4W4</accession>